<keyword id="KW-0150">Chloroplast</keyword>
<keyword id="KW-0456">Lyase</keyword>
<keyword id="KW-0460">Magnesium</keyword>
<keyword id="KW-0479">Metal-binding</keyword>
<keyword id="KW-0934">Plastid</keyword>
<keyword id="KW-0809">Transit peptide</keyword>
<organism>
    <name type="scientific">Cannabis sativa</name>
    <name type="common">Hemp</name>
    <name type="synonym">Marijuana</name>
    <dbReference type="NCBI Taxonomy" id="3483"/>
    <lineage>
        <taxon>Eukaryota</taxon>
        <taxon>Viridiplantae</taxon>
        <taxon>Streptophyta</taxon>
        <taxon>Embryophyta</taxon>
        <taxon>Tracheophyta</taxon>
        <taxon>Spermatophyta</taxon>
        <taxon>Magnoliopsida</taxon>
        <taxon>eudicotyledons</taxon>
        <taxon>Gunneridae</taxon>
        <taxon>Pentapetalae</taxon>
        <taxon>rosids</taxon>
        <taxon>fabids</taxon>
        <taxon>Rosales</taxon>
        <taxon>Cannabaceae</taxon>
        <taxon>Cannabis</taxon>
    </lineage>
</organism>
<feature type="transit peptide" description="Chloroplast" evidence="2">
    <location>
        <begin position="1"/>
        <end position="95"/>
    </location>
</feature>
<feature type="chain" id="PRO_0000460906" description="(Z)-beta-ocimene synthase TPS13PK, chloroplastic">
    <location>
        <begin position="96"/>
        <end position="640"/>
    </location>
</feature>
<feature type="region of interest" description="Disordered" evidence="3">
    <location>
        <begin position="50"/>
        <end position="69"/>
    </location>
</feature>
<feature type="short sequence motif" description="DDXXD motif" evidence="6">
    <location>
        <begin position="371"/>
        <end position="375"/>
    </location>
</feature>
<feature type="compositionally biased region" description="Polar residues" evidence="3">
    <location>
        <begin position="60"/>
        <end position="69"/>
    </location>
</feature>
<feature type="binding site" evidence="1">
    <location>
        <position position="334"/>
    </location>
    <ligand>
        <name>(2E)-geranyl diphosphate</name>
        <dbReference type="ChEBI" id="CHEBI:58057"/>
    </ligand>
</feature>
<feature type="binding site" evidence="1">
    <location>
        <position position="371"/>
    </location>
    <ligand>
        <name>(2E)-geranyl diphosphate</name>
        <dbReference type="ChEBI" id="CHEBI:58057"/>
    </ligand>
</feature>
<feature type="binding site" evidence="1">
    <location>
        <position position="371"/>
    </location>
    <ligand>
        <name>Mg(2+)</name>
        <dbReference type="ChEBI" id="CHEBI:18420"/>
        <label>1</label>
    </ligand>
</feature>
<feature type="binding site" evidence="1">
    <location>
        <position position="371"/>
    </location>
    <ligand>
        <name>Mg(2+)</name>
        <dbReference type="ChEBI" id="CHEBI:18420"/>
        <label>2</label>
    </ligand>
</feature>
<feature type="binding site" evidence="1">
    <location>
        <position position="375"/>
    </location>
    <ligand>
        <name>(2E)-geranyl diphosphate</name>
        <dbReference type="ChEBI" id="CHEBI:58057"/>
    </ligand>
</feature>
<feature type="binding site" evidence="1">
    <location>
        <position position="375"/>
    </location>
    <ligand>
        <name>Mg(2+)</name>
        <dbReference type="ChEBI" id="CHEBI:18420"/>
        <label>1</label>
    </ligand>
</feature>
<feature type="binding site" evidence="1">
    <location>
        <position position="375"/>
    </location>
    <ligand>
        <name>Mg(2+)</name>
        <dbReference type="ChEBI" id="CHEBI:18420"/>
        <label>2</label>
    </ligand>
</feature>
<feature type="binding site" evidence="1">
    <location>
        <position position="515"/>
    </location>
    <ligand>
        <name>(2E)-geranyl diphosphate</name>
        <dbReference type="ChEBI" id="CHEBI:58057"/>
    </ligand>
</feature>
<feature type="binding site" evidence="1">
    <location>
        <position position="518"/>
    </location>
    <ligand>
        <name>(2E)-geranyl diphosphate</name>
        <dbReference type="ChEBI" id="CHEBI:58057"/>
    </ligand>
</feature>
<feature type="binding site" evidence="1">
    <location>
        <position position="518"/>
    </location>
    <ligand>
        <name>Mg(2+)</name>
        <dbReference type="ChEBI" id="CHEBI:18420"/>
        <label>3</label>
    </ligand>
</feature>
<feature type="binding site" evidence="1">
    <location>
        <position position="522"/>
    </location>
    <ligand>
        <name>Mg(2+)</name>
        <dbReference type="ChEBI" id="CHEBI:18420"/>
        <label>3</label>
    </ligand>
</feature>
<feature type="binding site" evidence="1">
    <location>
        <position position="526"/>
    </location>
    <ligand>
        <name>Mg(2+)</name>
        <dbReference type="ChEBI" id="CHEBI:18420"/>
        <label>3</label>
    </ligand>
</feature>
<dbReference type="EC" id="4.2.3.228" evidence="4"/>
<dbReference type="EMBL" id="KY014558">
    <property type="protein sequence ID" value="ARE72254.3"/>
    <property type="molecule type" value="mRNA"/>
</dbReference>
<dbReference type="SMR" id="A0A1V0QSG1"/>
<dbReference type="BRENDA" id="4.2.3.B69">
    <property type="organism ID" value="1159"/>
</dbReference>
<dbReference type="UniPathway" id="UPA00213"/>
<dbReference type="Proteomes" id="UP000596661">
    <property type="component" value="Unplaced"/>
</dbReference>
<dbReference type="GO" id="GO:0009507">
    <property type="term" value="C:chloroplast"/>
    <property type="evidence" value="ECO:0007669"/>
    <property type="project" value="UniProtKB-SubCell"/>
</dbReference>
<dbReference type="GO" id="GO:0000287">
    <property type="term" value="F:magnesium ion binding"/>
    <property type="evidence" value="ECO:0007669"/>
    <property type="project" value="InterPro"/>
</dbReference>
<dbReference type="GO" id="GO:0010333">
    <property type="term" value="F:terpene synthase activity"/>
    <property type="evidence" value="ECO:0007669"/>
    <property type="project" value="InterPro"/>
</dbReference>
<dbReference type="GO" id="GO:0016102">
    <property type="term" value="P:diterpenoid biosynthetic process"/>
    <property type="evidence" value="ECO:0007669"/>
    <property type="project" value="InterPro"/>
</dbReference>
<dbReference type="CDD" id="cd00684">
    <property type="entry name" value="Terpene_cyclase_plant_C1"/>
    <property type="match status" value="1"/>
</dbReference>
<dbReference type="FunFam" id="1.10.600.10:FF:000007">
    <property type="entry name" value="Isoprene synthase, chloroplastic"/>
    <property type="match status" value="1"/>
</dbReference>
<dbReference type="FunFam" id="1.50.10.130:FF:000001">
    <property type="entry name" value="Isoprene synthase, chloroplastic"/>
    <property type="match status" value="1"/>
</dbReference>
<dbReference type="Gene3D" id="1.10.600.10">
    <property type="entry name" value="Farnesyl Diphosphate Synthase"/>
    <property type="match status" value="1"/>
</dbReference>
<dbReference type="Gene3D" id="1.50.10.130">
    <property type="entry name" value="Terpene synthase, N-terminal domain"/>
    <property type="match status" value="1"/>
</dbReference>
<dbReference type="InterPro" id="IPR008949">
    <property type="entry name" value="Isoprenoid_synthase_dom_sf"/>
</dbReference>
<dbReference type="InterPro" id="IPR034741">
    <property type="entry name" value="Terpene_cyclase-like_1_C"/>
</dbReference>
<dbReference type="InterPro" id="IPR044814">
    <property type="entry name" value="Terpene_cyclase_plant_C1"/>
</dbReference>
<dbReference type="InterPro" id="IPR001906">
    <property type="entry name" value="Terpene_synth_N"/>
</dbReference>
<dbReference type="InterPro" id="IPR036965">
    <property type="entry name" value="Terpene_synth_N_sf"/>
</dbReference>
<dbReference type="InterPro" id="IPR050148">
    <property type="entry name" value="Terpene_synthase-like"/>
</dbReference>
<dbReference type="InterPro" id="IPR005630">
    <property type="entry name" value="Terpene_synthase_metal-bd"/>
</dbReference>
<dbReference type="InterPro" id="IPR008930">
    <property type="entry name" value="Terpenoid_cyclase/PrenylTrfase"/>
</dbReference>
<dbReference type="PANTHER" id="PTHR31225">
    <property type="entry name" value="OS04G0344100 PROTEIN-RELATED"/>
    <property type="match status" value="1"/>
</dbReference>
<dbReference type="PANTHER" id="PTHR31225:SF9">
    <property type="entry name" value="TERPENE SYNTHASE 10"/>
    <property type="match status" value="1"/>
</dbReference>
<dbReference type="Pfam" id="PF01397">
    <property type="entry name" value="Terpene_synth"/>
    <property type="match status" value="1"/>
</dbReference>
<dbReference type="Pfam" id="PF03936">
    <property type="entry name" value="Terpene_synth_C"/>
    <property type="match status" value="1"/>
</dbReference>
<dbReference type="SFLD" id="SFLDS00005">
    <property type="entry name" value="Isoprenoid_Synthase_Type_I"/>
    <property type="match status" value="1"/>
</dbReference>
<dbReference type="SFLD" id="SFLDG01019">
    <property type="entry name" value="Terpene_Cyclase_Like_1_C_Termi"/>
    <property type="match status" value="1"/>
</dbReference>
<dbReference type="SUPFAM" id="SSF48239">
    <property type="entry name" value="Terpenoid cyclases/Protein prenyltransferases"/>
    <property type="match status" value="1"/>
</dbReference>
<dbReference type="SUPFAM" id="SSF48576">
    <property type="entry name" value="Terpenoid synthases"/>
    <property type="match status" value="1"/>
</dbReference>
<sequence>MAALVSTVSSIIRWNSNNNNNNNFTRSVKSCLSSNYHNNNNIIHNKTVLMSTNNNNNNNQKNSSRRSANYQPPLWQFDYVQSLSSPFKDEAYVKRVEKLKEEVRVMVKRAREEEKPLSQLELIDVLQRLGISYHFEDEINDILKHIYNNNNVYNTNNNVYANSLEFRLLRQHGYPVSQEIFSTCKDERGNFMVCTNDIKGMLSLYEASFYLVENEDGILEETREKTKKYLEEYIIMIMEKQQSLLDQNNNNYDYDYDYELVSHALELPLHWRMLRLESRWFIDVYEKRLDMNPTLLTLAKLDFNIVQSIYQDDLKHVFSWWESTDMGKKLEFARDRTMVNFLWTVGVAFEPHFKSFRRMITKVNALITVIDDIYDVYGTLDELELFTNAVERWDISAMDGLPEYMKTCFLALYNFINDLPFDVLKGEEGLHIIKFLQKSWADLCKSYLREARWYYNGYTPSFEEYIENAWISISGPVILSHLYFFVVNPNKENALLSTCFDGYPTIIRHSSMILRLKDDMGTSTDELKRGDVPKSIQCKMYEDGISEEEARQRIKLLISETWKLINKDYINLDDDDDGGDDYSPMFYKSNNINKAFIEMCLNLGRMAHCIYQYGDGHGIQDRQTKDHVLSLLIHPIPLTQ</sequence>
<evidence type="ECO:0000250" key="1">
    <source>
        <dbReference type="UniProtKB" id="Q40577"/>
    </source>
</evidence>
<evidence type="ECO:0000255" key="2"/>
<evidence type="ECO:0000256" key="3">
    <source>
        <dbReference type="SAM" id="MobiDB-lite"/>
    </source>
</evidence>
<evidence type="ECO:0000269" key="4">
    <source>
    </source>
</evidence>
<evidence type="ECO:0000303" key="5">
    <source>
    </source>
</evidence>
<evidence type="ECO:0000305" key="6"/>
<protein>
    <recommendedName>
        <fullName evidence="5">(Z)-beta-ocimene synthase TPS13PK, chloroplastic</fullName>
        <ecNumber evidence="4">4.2.3.228</ecNumber>
    </recommendedName>
    <alternativeName>
        <fullName evidence="5">Terpene synthase 13PK</fullName>
        <shortName evidence="5">CsTPS13PK</shortName>
    </alternativeName>
</protein>
<name>T13PK_CANSA</name>
<proteinExistence type="evidence at protein level"/>
<comment type="function">
    <text evidence="4">Involved in monoterpene (C10) olefins biosynthesis, constituants of cannabinoids and terpenoids-rich resins (PubMed:28355238). Catalyzes mainly the conversion of (2E)-geranyl diphosphate to (Z)-beta-ocimene (PubMed:28355238).</text>
</comment>
<comment type="catalytic activity">
    <reaction evidence="4">
        <text>(2E)-geranyl diphosphate = (Z)-beta-ocimene + diphosphate</text>
        <dbReference type="Rhea" id="RHEA:68824"/>
        <dbReference type="ChEBI" id="CHEBI:33019"/>
        <dbReference type="ChEBI" id="CHEBI:58057"/>
        <dbReference type="ChEBI" id="CHEBI:87574"/>
        <dbReference type="EC" id="4.2.3.228"/>
    </reaction>
    <physiologicalReaction direction="left-to-right" evidence="4">
        <dbReference type="Rhea" id="RHEA:68825"/>
    </physiologicalReaction>
</comment>
<comment type="cofactor">
    <cofactor evidence="1">
        <name>Mg(2+)</name>
        <dbReference type="ChEBI" id="CHEBI:18420"/>
    </cofactor>
    <text evidence="1">Binds 3 Mg(2+) ions per subunit.</text>
</comment>
<comment type="pathway">
    <text evidence="4">Secondary metabolite biosynthesis; terpenoid biosynthesis.</text>
</comment>
<comment type="subunit">
    <text evidence="1">Monomer.</text>
</comment>
<comment type="subcellular location">
    <subcellularLocation>
        <location evidence="2">Plastid</location>
        <location evidence="2">Chloroplast</location>
    </subcellularLocation>
</comment>
<comment type="domain">
    <text evidence="6">The Asp-Asp-Xaa-Xaa-Asp/Glu (DDXXD/E) motif is important for the catalytic activity, presumably through binding to Mg(2+).</text>
</comment>
<comment type="similarity">
    <text evidence="6">Belongs to the terpene synthase family.</text>
</comment>
<accession>A0A1V0QSG1</accession>
<accession>A0A1V0QSG2</accession>
<gene>
    <name evidence="5" type="primary">TPS13PK</name>
</gene>
<reference key="1">
    <citation type="journal article" date="2017" name="PLoS ONE">
        <title>Terpene synthases from Cannabis sativa.</title>
        <authorList>
            <person name="Booth J.K."/>
            <person name="Page J.E."/>
            <person name="Bohlmann J."/>
        </authorList>
    </citation>
    <scope>NUCLEOTIDE SEQUENCE [MRNA]</scope>
    <scope>FUNCTION</scope>
    <scope>CATALYTIC ACTIVITY</scope>
    <scope>PATHWAY</scope>
    <source>
        <strain>cv. Purple Kush TPS13</strain>
    </source>
</reference>